<protein>
    <recommendedName>
        <fullName>Pre-mRNA-splicing factor cef1</fullName>
    </recommendedName>
</protein>
<organism>
    <name type="scientific">Emericella nidulans (strain FGSC A4 / ATCC 38163 / CBS 112.46 / NRRL 194 / M139)</name>
    <name type="common">Aspergillus nidulans</name>
    <dbReference type="NCBI Taxonomy" id="227321"/>
    <lineage>
        <taxon>Eukaryota</taxon>
        <taxon>Fungi</taxon>
        <taxon>Dikarya</taxon>
        <taxon>Ascomycota</taxon>
        <taxon>Pezizomycotina</taxon>
        <taxon>Eurotiomycetes</taxon>
        <taxon>Eurotiomycetidae</taxon>
        <taxon>Eurotiales</taxon>
        <taxon>Aspergillaceae</taxon>
        <taxon>Aspergillus</taxon>
        <taxon>Aspergillus subgen. Nidulantes</taxon>
    </lineage>
</organism>
<comment type="function">
    <text evidence="1">Involved in pre-mRNA splicing and cell cycle control.</text>
</comment>
<comment type="subunit">
    <text evidence="1">Associated with the spliceosome.</text>
</comment>
<comment type="subcellular location">
    <subcellularLocation>
        <location evidence="1">Cytoplasm</location>
    </subcellularLocation>
    <subcellularLocation>
        <location evidence="3">Nucleus</location>
    </subcellularLocation>
</comment>
<comment type="similarity">
    <text evidence="5">Belongs to the CEF1 family.</text>
</comment>
<comment type="sequence caution" evidence="5">
    <conflict type="erroneous gene model prediction">
        <sequence resource="EMBL-CDS" id="EAA62075"/>
    </conflict>
    <text>The predicted gene AN7495 has been split into 2 genes: AN10944 and AN10956.</text>
</comment>
<gene>
    <name type="primary">cef1</name>
    <name type="ORF">AN10944</name>
</gene>
<proteinExistence type="inferred from homology"/>
<keyword id="KW-0175">Coiled coil</keyword>
<keyword id="KW-0963">Cytoplasm</keyword>
<keyword id="KW-0238">DNA-binding</keyword>
<keyword id="KW-0507">mRNA processing</keyword>
<keyword id="KW-0508">mRNA splicing</keyword>
<keyword id="KW-0539">Nucleus</keyword>
<keyword id="KW-1185">Reference proteome</keyword>
<keyword id="KW-0677">Repeat</keyword>
<keyword id="KW-0747">Spliceosome</keyword>
<feature type="chain" id="PRO_0000197100" description="Pre-mRNA-splicing factor cef1">
    <location>
        <begin position="1"/>
        <end position="791"/>
    </location>
</feature>
<feature type="domain" description="HTH myb-type 1" evidence="3">
    <location>
        <begin position="1"/>
        <end position="56"/>
    </location>
</feature>
<feature type="domain" description="HTH myb-type 2" evidence="3">
    <location>
        <begin position="57"/>
        <end position="106"/>
    </location>
</feature>
<feature type="DNA-binding region" description="H-T-H motif" evidence="3">
    <location>
        <begin position="29"/>
        <end position="52"/>
    </location>
</feature>
<feature type="DNA-binding region" description="H-T-H motif" evidence="3">
    <location>
        <begin position="80"/>
        <end position="102"/>
    </location>
</feature>
<feature type="region of interest" description="Disordered" evidence="4">
    <location>
        <begin position="110"/>
        <end position="188"/>
    </location>
</feature>
<feature type="region of interest" description="Disordered" evidence="4">
    <location>
        <begin position="225"/>
        <end position="318"/>
    </location>
</feature>
<feature type="region of interest" description="Disordered" evidence="4">
    <location>
        <begin position="390"/>
        <end position="471"/>
    </location>
</feature>
<feature type="region of interest" description="Disordered" evidence="4">
    <location>
        <begin position="494"/>
        <end position="526"/>
    </location>
</feature>
<feature type="coiled-coil region" evidence="2">
    <location>
        <begin position="523"/>
        <end position="551"/>
    </location>
</feature>
<feature type="coiled-coil region" evidence="2">
    <location>
        <begin position="705"/>
        <end position="779"/>
    </location>
</feature>
<feature type="compositionally biased region" description="Basic and acidic residues" evidence="4">
    <location>
        <begin position="128"/>
        <end position="151"/>
    </location>
</feature>
<feature type="compositionally biased region" description="Basic and acidic residues" evidence="4">
    <location>
        <begin position="240"/>
        <end position="255"/>
    </location>
</feature>
<feature type="compositionally biased region" description="Low complexity" evidence="4">
    <location>
        <begin position="280"/>
        <end position="292"/>
    </location>
</feature>
<accession>C8VBH3</accession>
<accession>Q5AW35</accession>
<sequence length="791" mass="88457">MPVVKGGVWTNIEDEVLRAAVSKYGLNQWARVSSLLARKTPKQCKARWVEWLDPGIRKVEWSREEDEKLLHLAKLMPTQWRTIAPIVGRTATQCLERYQKLLDEAEARENDELGLGGPGTEASAPSADDVRRLRPGELDPDPESKPARPDTIDLDEDEKEMLSEARARLANTQGKKAKRKARERQLEESRRLAVLQKRRELKNAGINIKIVTRKPGEMDYNADIPFEKPAAPGFYDTTEEEARNERQREMFDPRKQQLANKRKGDQDEEAERKKRKNDKNSNSAAFAAAARAGQMQKIREAEQSSKRRALVLPTPQVSESEMEDIIKMGMAGDKASKMVGDEEGTKGLLGNYSAMVGGTPIRTPRAPPEEDHIANEIRNIRALTETQSSLLGGENTPLHDGGSSTGFDGIAPRRQQIVTPNPMATPFRQGNAVSATPVPGGAGPGATPLRTPRDHFSLNKEISGGLPIGSTPREIKMRENLARQSIRGRLAALPKPKETEWELEQLPSESAEPAGATEYPEEDSAVRDAREKEIRKRAAEAEHKRQTQVYQRSLPRPVVLDIDALMERASRVMDPITGLIAKEAALLVANDACKFATPGAKIEGKPRKLERLDDKYLEEARAAIASEASSGKLEEWSNEFDAKWSSSRQDTLPGLSNYLDDDEEDAYQQEQRIIGVFDNVQASLLATAEDGNKLEKKLALHYGGYQNRAKMLRAKITEAHTALEKSKHELDAFRTLQISEEAAISRRLEKLREEVAFVMRREREAQEQYRCRKDELDDLVASTGGMVNGWH</sequence>
<evidence type="ECO:0000250" key="1"/>
<evidence type="ECO:0000255" key="2"/>
<evidence type="ECO:0000255" key="3">
    <source>
        <dbReference type="PROSITE-ProRule" id="PRU00625"/>
    </source>
</evidence>
<evidence type="ECO:0000256" key="4">
    <source>
        <dbReference type="SAM" id="MobiDB-lite"/>
    </source>
</evidence>
<evidence type="ECO:0000305" key="5"/>
<name>CEF1_EMENI</name>
<dbReference type="EMBL" id="AACD01000129">
    <property type="protein sequence ID" value="EAA62075.1"/>
    <property type="status" value="ALT_SEQ"/>
    <property type="molecule type" value="Genomic_DNA"/>
</dbReference>
<dbReference type="EMBL" id="BN001304">
    <property type="protein sequence ID" value="CBF79492.1"/>
    <property type="molecule type" value="Genomic_DNA"/>
</dbReference>
<dbReference type="SMR" id="C8VBH3"/>
<dbReference type="STRING" id="227321.C8VBH3"/>
<dbReference type="EnsemblFungi" id="CBF79492">
    <property type="protein sequence ID" value="CBF79492"/>
    <property type="gene ID" value="ANIA_10944"/>
</dbReference>
<dbReference type="VEuPathDB" id="FungiDB:AN10944"/>
<dbReference type="eggNOG" id="KOG0050">
    <property type="taxonomic scope" value="Eukaryota"/>
</dbReference>
<dbReference type="HOGENOM" id="CLU_005700_0_0_1"/>
<dbReference type="InParanoid" id="C8VBH3"/>
<dbReference type="OMA" id="KMGMAGE"/>
<dbReference type="OrthoDB" id="1410009at2759"/>
<dbReference type="Proteomes" id="UP000000560">
    <property type="component" value="Chromosome IV"/>
</dbReference>
<dbReference type="GO" id="GO:0005829">
    <property type="term" value="C:cytosol"/>
    <property type="evidence" value="ECO:0007669"/>
    <property type="project" value="EnsemblFungi"/>
</dbReference>
<dbReference type="GO" id="GO:0140602">
    <property type="term" value="C:nucleolar peripheral inclusion body"/>
    <property type="evidence" value="ECO:0007669"/>
    <property type="project" value="EnsemblFungi"/>
</dbReference>
<dbReference type="GO" id="GO:0071014">
    <property type="term" value="C:post-mRNA release spliceosomal complex"/>
    <property type="evidence" value="ECO:0007669"/>
    <property type="project" value="EnsemblFungi"/>
</dbReference>
<dbReference type="GO" id="GO:0000974">
    <property type="term" value="C:Prp19 complex"/>
    <property type="evidence" value="ECO:0000318"/>
    <property type="project" value="GO_Central"/>
</dbReference>
<dbReference type="GO" id="GO:0005681">
    <property type="term" value="C:spliceosomal complex"/>
    <property type="evidence" value="ECO:0000318"/>
    <property type="project" value="GO_Central"/>
</dbReference>
<dbReference type="GO" id="GO:0003677">
    <property type="term" value="F:DNA binding"/>
    <property type="evidence" value="ECO:0007669"/>
    <property type="project" value="UniProtKB-KW"/>
</dbReference>
<dbReference type="GO" id="GO:0045292">
    <property type="term" value="P:mRNA cis splicing, via spliceosome"/>
    <property type="evidence" value="ECO:0007669"/>
    <property type="project" value="EnsemblFungi"/>
</dbReference>
<dbReference type="GO" id="GO:0000398">
    <property type="term" value="P:mRNA splicing, via spliceosome"/>
    <property type="evidence" value="ECO:0000318"/>
    <property type="project" value="GO_Central"/>
</dbReference>
<dbReference type="CDD" id="cd00167">
    <property type="entry name" value="SANT"/>
    <property type="match status" value="1"/>
</dbReference>
<dbReference type="CDD" id="cd11659">
    <property type="entry name" value="SANT_CDC5_II"/>
    <property type="match status" value="1"/>
</dbReference>
<dbReference type="FunFam" id="1.10.10.60:FF:000021">
    <property type="entry name" value="CDC5 cell division cycle 5-like"/>
    <property type="match status" value="1"/>
</dbReference>
<dbReference type="Gene3D" id="1.10.10.60">
    <property type="entry name" value="Homeodomain-like"/>
    <property type="match status" value="2"/>
</dbReference>
<dbReference type="InterPro" id="IPR047242">
    <property type="entry name" value="CDC5L/Cef1"/>
</dbReference>
<dbReference type="InterPro" id="IPR021786">
    <property type="entry name" value="Cdc5p/Cef1_C"/>
</dbReference>
<dbReference type="InterPro" id="IPR009057">
    <property type="entry name" value="Homeodomain-like_sf"/>
</dbReference>
<dbReference type="InterPro" id="IPR017930">
    <property type="entry name" value="Myb_dom"/>
</dbReference>
<dbReference type="InterPro" id="IPR001005">
    <property type="entry name" value="SANT/Myb"/>
</dbReference>
<dbReference type="InterPro" id="IPR047240">
    <property type="entry name" value="SANT_CDC5L_II"/>
</dbReference>
<dbReference type="PANTHER" id="PTHR45885">
    <property type="entry name" value="CELL DIVISION CYCLE 5-LIKE PROTEIN"/>
    <property type="match status" value="1"/>
</dbReference>
<dbReference type="PANTHER" id="PTHR45885:SF1">
    <property type="entry name" value="CELL DIVISION CYCLE 5-LIKE PROTEIN"/>
    <property type="match status" value="1"/>
</dbReference>
<dbReference type="Pfam" id="PF11831">
    <property type="entry name" value="Myb_Cef"/>
    <property type="match status" value="1"/>
</dbReference>
<dbReference type="Pfam" id="PF13921">
    <property type="entry name" value="Myb_DNA-bind_6"/>
    <property type="match status" value="1"/>
</dbReference>
<dbReference type="SMART" id="SM00717">
    <property type="entry name" value="SANT"/>
    <property type="match status" value="2"/>
</dbReference>
<dbReference type="SUPFAM" id="SSF46689">
    <property type="entry name" value="Homeodomain-like"/>
    <property type="match status" value="1"/>
</dbReference>
<dbReference type="PROSITE" id="PS51294">
    <property type="entry name" value="HTH_MYB"/>
    <property type="match status" value="2"/>
</dbReference>
<reference key="1">
    <citation type="journal article" date="2005" name="Nature">
        <title>Sequencing of Aspergillus nidulans and comparative analysis with A. fumigatus and A. oryzae.</title>
        <authorList>
            <person name="Galagan J.E."/>
            <person name="Calvo S.E."/>
            <person name="Cuomo C."/>
            <person name="Ma L.-J."/>
            <person name="Wortman J.R."/>
            <person name="Batzoglou S."/>
            <person name="Lee S.-I."/>
            <person name="Bastuerkmen M."/>
            <person name="Spevak C.C."/>
            <person name="Clutterbuck J."/>
            <person name="Kapitonov V."/>
            <person name="Jurka J."/>
            <person name="Scazzocchio C."/>
            <person name="Farman M.L."/>
            <person name="Butler J."/>
            <person name="Purcell S."/>
            <person name="Harris S."/>
            <person name="Braus G.H."/>
            <person name="Draht O."/>
            <person name="Busch S."/>
            <person name="D'Enfert C."/>
            <person name="Bouchier C."/>
            <person name="Goldman G.H."/>
            <person name="Bell-Pedersen D."/>
            <person name="Griffiths-Jones S."/>
            <person name="Doonan J.H."/>
            <person name="Yu J."/>
            <person name="Vienken K."/>
            <person name="Pain A."/>
            <person name="Freitag M."/>
            <person name="Selker E.U."/>
            <person name="Archer D.B."/>
            <person name="Penalva M.A."/>
            <person name="Oakley B.R."/>
            <person name="Momany M."/>
            <person name="Tanaka T."/>
            <person name="Kumagai T."/>
            <person name="Asai K."/>
            <person name="Machida M."/>
            <person name="Nierman W.C."/>
            <person name="Denning D.W."/>
            <person name="Caddick M.X."/>
            <person name="Hynes M."/>
            <person name="Paoletti M."/>
            <person name="Fischer R."/>
            <person name="Miller B.L."/>
            <person name="Dyer P.S."/>
            <person name="Sachs M.S."/>
            <person name="Osmani S.A."/>
            <person name="Birren B.W."/>
        </authorList>
    </citation>
    <scope>NUCLEOTIDE SEQUENCE [LARGE SCALE GENOMIC DNA]</scope>
    <source>
        <strain>FGSC A4 / ATCC 38163 / CBS 112.46 / NRRL 194 / M139</strain>
    </source>
</reference>
<reference key="2">
    <citation type="journal article" date="2009" name="Fungal Genet. Biol.">
        <title>The 2008 update of the Aspergillus nidulans genome annotation: a community effort.</title>
        <authorList>
            <person name="Wortman J.R."/>
            <person name="Gilsenan J.M."/>
            <person name="Joardar V."/>
            <person name="Deegan J."/>
            <person name="Clutterbuck J."/>
            <person name="Andersen M.R."/>
            <person name="Archer D."/>
            <person name="Bencina M."/>
            <person name="Braus G."/>
            <person name="Coutinho P."/>
            <person name="von Dohren H."/>
            <person name="Doonan J."/>
            <person name="Driessen A.J."/>
            <person name="Durek P."/>
            <person name="Espeso E."/>
            <person name="Fekete E."/>
            <person name="Flipphi M."/>
            <person name="Estrada C.G."/>
            <person name="Geysens S."/>
            <person name="Goldman G."/>
            <person name="de Groot P.W."/>
            <person name="Hansen K."/>
            <person name="Harris S.D."/>
            <person name="Heinekamp T."/>
            <person name="Helmstaedt K."/>
            <person name="Henrissat B."/>
            <person name="Hofmann G."/>
            <person name="Homan T."/>
            <person name="Horio T."/>
            <person name="Horiuchi H."/>
            <person name="James S."/>
            <person name="Jones M."/>
            <person name="Karaffa L."/>
            <person name="Karanyi Z."/>
            <person name="Kato M."/>
            <person name="Keller N."/>
            <person name="Kelly D.E."/>
            <person name="Kiel J.A."/>
            <person name="Kim J.M."/>
            <person name="van der Klei I.J."/>
            <person name="Klis F.M."/>
            <person name="Kovalchuk A."/>
            <person name="Krasevec N."/>
            <person name="Kubicek C.P."/>
            <person name="Liu B."/>
            <person name="Maccabe A."/>
            <person name="Meyer V."/>
            <person name="Mirabito P."/>
            <person name="Miskei M."/>
            <person name="Mos M."/>
            <person name="Mullins J."/>
            <person name="Nelson D.R."/>
            <person name="Nielsen J."/>
            <person name="Oakley B.R."/>
            <person name="Osmani S.A."/>
            <person name="Pakula T."/>
            <person name="Paszewski A."/>
            <person name="Paulsen I."/>
            <person name="Pilsyk S."/>
            <person name="Pocsi I."/>
            <person name="Punt P.J."/>
            <person name="Ram A.F."/>
            <person name="Ren Q."/>
            <person name="Robellet X."/>
            <person name="Robson G."/>
            <person name="Seiboth B."/>
            <person name="van Solingen P."/>
            <person name="Specht T."/>
            <person name="Sun J."/>
            <person name="Taheri-Talesh N."/>
            <person name="Takeshita N."/>
            <person name="Ussery D."/>
            <person name="vanKuyk P.A."/>
            <person name="Visser H."/>
            <person name="van de Vondervoort P.J."/>
            <person name="de Vries R.P."/>
            <person name="Walton J."/>
            <person name="Xiang X."/>
            <person name="Xiong Y."/>
            <person name="Zeng A.P."/>
            <person name="Brandt B.W."/>
            <person name="Cornell M.J."/>
            <person name="van den Hondel C.A."/>
            <person name="Visser J."/>
            <person name="Oliver S.G."/>
            <person name="Turner G."/>
        </authorList>
    </citation>
    <scope>GENOME REANNOTATION</scope>
    <source>
        <strain>FGSC A4 / ATCC 38163 / CBS 112.46 / NRRL 194 / M139</strain>
    </source>
</reference>